<comment type="catalytic activity">
    <reaction>
        <text>a primary alcohol + NAD(+) = an aldehyde + NADH + H(+)</text>
        <dbReference type="Rhea" id="RHEA:10736"/>
        <dbReference type="ChEBI" id="CHEBI:15378"/>
        <dbReference type="ChEBI" id="CHEBI:15734"/>
        <dbReference type="ChEBI" id="CHEBI:17478"/>
        <dbReference type="ChEBI" id="CHEBI:57540"/>
        <dbReference type="ChEBI" id="CHEBI:57945"/>
        <dbReference type="EC" id="1.1.1.1"/>
    </reaction>
</comment>
<comment type="catalytic activity">
    <reaction>
        <text>a secondary alcohol + NAD(+) = a ketone + NADH + H(+)</text>
        <dbReference type="Rhea" id="RHEA:10740"/>
        <dbReference type="ChEBI" id="CHEBI:15378"/>
        <dbReference type="ChEBI" id="CHEBI:17087"/>
        <dbReference type="ChEBI" id="CHEBI:35681"/>
        <dbReference type="ChEBI" id="CHEBI:57540"/>
        <dbReference type="ChEBI" id="CHEBI:57945"/>
        <dbReference type="EC" id="1.1.1.1"/>
    </reaction>
</comment>
<comment type="cofactor">
    <cofactor>
        <name>Zn(2+)</name>
        <dbReference type="ChEBI" id="CHEBI:29105"/>
    </cofactor>
    <text>Binds 2 Zn(2+) ions per subunit.</text>
</comment>
<comment type="subunit">
    <text>Homodimer.</text>
</comment>
<comment type="subcellular location">
    <subcellularLocation>
        <location>Cytoplasm</location>
    </subcellularLocation>
</comment>
<comment type="similarity">
    <text evidence="3">Belongs to the zinc-containing alcohol dehydrogenase family. Class-I subfamily.</text>
</comment>
<feature type="chain" id="PRO_0000160673" description="Alcohol dehydrogenase 1">
    <location>
        <begin position="1"/>
        <end position="375"/>
    </location>
</feature>
<feature type="binding site">
    <location>
        <position position="46"/>
    </location>
    <ligand>
        <name>Zn(2+)</name>
        <dbReference type="ChEBI" id="CHEBI:29105"/>
        <label>1</label>
        <note>catalytic</note>
    </ligand>
</feature>
<feature type="binding site">
    <location>
        <position position="67"/>
    </location>
    <ligand>
        <name>Zn(2+)</name>
        <dbReference type="ChEBI" id="CHEBI:29105"/>
        <label>1</label>
        <note>catalytic</note>
    </ligand>
</feature>
<feature type="binding site">
    <location>
        <position position="97"/>
    </location>
    <ligand>
        <name>Zn(2+)</name>
        <dbReference type="ChEBI" id="CHEBI:29105"/>
        <label>2</label>
    </ligand>
</feature>
<feature type="binding site">
    <location>
        <position position="100"/>
    </location>
    <ligand>
        <name>Zn(2+)</name>
        <dbReference type="ChEBI" id="CHEBI:29105"/>
        <label>2</label>
    </ligand>
</feature>
<feature type="binding site">
    <location>
        <position position="103"/>
    </location>
    <ligand>
        <name>Zn(2+)</name>
        <dbReference type="ChEBI" id="CHEBI:29105"/>
        <label>2</label>
    </ligand>
</feature>
<feature type="binding site">
    <location>
        <position position="111"/>
    </location>
    <ligand>
        <name>Zn(2+)</name>
        <dbReference type="ChEBI" id="CHEBI:29105"/>
        <label>2</label>
    </ligand>
</feature>
<feature type="binding site">
    <location>
        <position position="175"/>
    </location>
    <ligand>
        <name>Zn(2+)</name>
        <dbReference type="ChEBI" id="CHEBI:29105"/>
        <label>1</label>
        <note>catalytic</note>
    </ligand>
</feature>
<feature type="binding site" evidence="1">
    <location>
        <begin position="200"/>
        <end position="205"/>
    </location>
    <ligand>
        <name>NAD(+)</name>
        <dbReference type="ChEBI" id="CHEBI:57540"/>
    </ligand>
</feature>
<feature type="binding site" evidence="1">
    <location>
        <position position="224"/>
    </location>
    <ligand>
        <name>NAD(+)</name>
        <dbReference type="ChEBI" id="CHEBI:57540"/>
    </ligand>
</feature>
<feature type="binding site" evidence="1">
    <location>
        <position position="229"/>
    </location>
    <ligand>
        <name>NAD(+)</name>
        <dbReference type="ChEBI" id="CHEBI:57540"/>
    </ligand>
</feature>
<feature type="binding site" evidence="1">
    <location>
        <begin position="293"/>
        <end position="295"/>
    </location>
    <ligand>
        <name>NAD(+)</name>
        <dbReference type="ChEBI" id="CHEBI:57540"/>
    </ligand>
</feature>
<feature type="binding site" evidence="1">
    <location>
        <position position="370"/>
    </location>
    <ligand>
        <name>NAD(+)</name>
        <dbReference type="ChEBI" id="CHEBI:57540"/>
    </ligand>
</feature>
<feature type="modified residue" description="N-acetylserine" evidence="2">
    <location>
        <position position="1"/>
    </location>
</feature>
<gene>
    <name type="primary">ADH1</name>
</gene>
<name>ADH1_COTJA</name>
<reference key="1">
    <citation type="journal article" date="1990" name="Biochemistry">
        <title>Avian alcohol dehydrogenase. Characterization of the quail enzyme, functional interpretations, and relationships to the different classes of mammalian alcohol dehydrogenase.</title>
        <authorList>
            <person name="Kaiser R."/>
            <person name="Nussrallah B."/>
            <person name="Dam R."/>
            <person name="Wagner F.W."/>
            <person name="Joernvall H."/>
        </authorList>
    </citation>
    <scope>PROTEIN SEQUENCE</scope>
    <scope>ACETYLATION AT SER-1</scope>
    <source>
        <tissue>Liver</tissue>
    </source>
</reference>
<dbReference type="EC" id="1.1.1.1"/>
<dbReference type="PIR" id="A35837">
    <property type="entry name" value="A35837"/>
</dbReference>
<dbReference type="SMR" id="P19631"/>
<dbReference type="iPTMnet" id="P19631"/>
<dbReference type="SABIO-RK" id="P19631"/>
<dbReference type="Proteomes" id="UP000694412">
    <property type="component" value="Unplaced"/>
</dbReference>
<dbReference type="GO" id="GO:0005829">
    <property type="term" value="C:cytosol"/>
    <property type="evidence" value="ECO:0007669"/>
    <property type="project" value="TreeGrafter"/>
</dbReference>
<dbReference type="GO" id="GO:0004745">
    <property type="term" value="F:all-trans-retinol dehydrogenase (NAD+) activity"/>
    <property type="evidence" value="ECO:0007669"/>
    <property type="project" value="TreeGrafter"/>
</dbReference>
<dbReference type="GO" id="GO:0008270">
    <property type="term" value="F:zinc ion binding"/>
    <property type="evidence" value="ECO:0007669"/>
    <property type="project" value="InterPro"/>
</dbReference>
<dbReference type="GO" id="GO:0042573">
    <property type="term" value="P:retinoic acid metabolic process"/>
    <property type="evidence" value="ECO:0007669"/>
    <property type="project" value="TreeGrafter"/>
</dbReference>
<dbReference type="GO" id="GO:0042572">
    <property type="term" value="P:retinol metabolic process"/>
    <property type="evidence" value="ECO:0007669"/>
    <property type="project" value="TreeGrafter"/>
</dbReference>
<dbReference type="CDD" id="cd08299">
    <property type="entry name" value="alcohol_DH_class_I_II_IV"/>
    <property type="match status" value="1"/>
</dbReference>
<dbReference type="FunFam" id="3.40.50.720:FF:001857">
    <property type="entry name" value="Alcohol dehydrogenase class 4 mu/sigma chain"/>
    <property type="match status" value="1"/>
</dbReference>
<dbReference type="FunFam" id="3.90.180.10:FF:000001">
    <property type="entry name" value="S-(hydroxymethyl)glutathione dehydrogenase"/>
    <property type="match status" value="1"/>
</dbReference>
<dbReference type="Gene3D" id="3.90.180.10">
    <property type="entry name" value="Medium-chain alcohol dehydrogenases, catalytic domain"/>
    <property type="match status" value="1"/>
</dbReference>
<dbReference type="Gene3D" id="3.40.50.720">
    <property type="entry name" value="NAD(P)-binding Rossmann-like Domain"/>
    <property type="match status" value="1"/>
</dbReference>
<dbReference type="InterPro" id="IPR013149">
    <property type="entry name" value="ADH-like_C"/>
</dbReference>
<dbReference type="InterPro" id="IPR013154">
    <property type="entry name" value="ADH-like_N"/>
</dbReference>
<dbReference type="InterPro" id="IPR002328">
    <property type="entry name" value="ADH_Zn_CS"/>
</dbReference>
<dbReference type="InterPro" id="IPR011032">
    <property type="entry name" value="GroES-like_sf"/>
</dbReference>
<dbReference type="InterPro" id="IPR036291">
    <property type="entry name" value="NAD(P)-bd_dom_sf"/>
</dbReference>
<dbReference type="InterPro" id="IPR020843">
    <property type="entry name" value="PKS_ER"/>
</dbReference>
<dbReference type="PANTHER" id="PTHR43880">
    <property type="entry name" value="ALCOHOL DEHYDROGENASE"/>
    <property type="match status" value="1"/>
</dbReference>
<dbReference type="PANTHER" id="PTHR43880:SF1">
    <property type="entry name" value="ALCOHOL DEHYDROGENASE 1A"/>
    <property type="match status" value="1"/>
</dbReference>
<dbReference type="Pfam" id="PF08240">
    <property type="entry name" value="ADH_N"/>
    <property type="match status" value="1"/>
</dbReference>
<dbReference type="Pfam" id="PF00107">
    <property type="entry name" value="ADH_zinc_N"/>
    <property type="match status" value="1"/>
</dbReference>
<dbReference type="SMART" id="SM00829">
    <property type="entry name" value="PKS_ER"/>
    <property type="match status" value="1"/>
</dbReference>
<dbReference type="SUPFAM" id="SSF50129">
    <property type="entry name" value="GroES-like"/>
    <property type="match status" value="2"/>
</dbReference>
<dbReference type="SUPFAM" id="SSF51735">
    <property type="entry name" value="NAD(P)-binding Rossmann-fold domains"/>
    <property type="match status" value="1"/>
</dbReference>
<dbReference type="PROSITE" id="PS00059">
    <property type="entry name" value="ADH_ZINC"/>
    <property type="match status" value="1"/>
</dbReference>
<keyword id="KW-0007">Acetylation</keyword>
<keyword id="KW-0963">Cytoplasm</keyword>
<keyword id="KW-0903">Direct protein sequencing</keyword>
<keyword id="KW-0479">Metal-binding</keyword>
<keyword id="KW-0520">NAD</keyword>
<keyword id="KW-0560">Oxidoreductase</keyword>
<keyword id="KW-1185">Reference proteome</keyword>
<keyword id="KW-0862">Zinc</keyword>
<evidence type="ECO:0000250" key="1"/>
<evidence type="ECO:0000269" key="2">
    <source>
    </source>
</evidence>
<evidence type="ECO:0000305" key="3"/>
<proteinExistence type="evidence at protein level"/>
<sequence>STAGKVIKCKAAVLWEANKPFSLEEVEVAPPKAHEVRIKIVATGICRSDDHVVTGALAMPFPVILGHEAAGVVESVGEKVTLLKPGDAVIPLFVPQCGECRSCLSTKGNLCIKNDLSSSPTGLMADGTTRFTCKGKAIHHFIGTSTFTEYTVVHETAAAKIDSAAPLEKVCLIGCGFSTGYGAVLQTAKVEPGSTCAVFGLGGVGLSVVMGCKAAGASRIIAIDINKDKFAKAKELGATECVNPKDFKKPIHEVLTEMTGKGVDYSFEVIGRIETMTEALASCHYNYGVSVIVGVPPAAQKISFDPMLIFSGRTWKGSVFGGWKSKDAVPKLVADYMKKKFVLDPLITHTLPFTKINEGFDLLRTGKSIRTVLVL</sequence>
<organism>
    <name type="scientific">Coturnix japonica</name>
    <name type="common">Japanese quail</name>
    <name type="synonym">Coturnix coturnix japonica</name>
    <dbReference type="NCBI Taxonomy" id="93934"/>
    <lineage>
        <taxon>Eukaryota</taxon>
        <taxon>Metazoa</taxon>
        <taxon>Chordata</taxon>
        <taxon>Craniata</taxon>
        <taxon>Vertebrata</taxon>
        <taxon>Euteleostomi</taxon>
        <taxon>Archelosauria</taxon>
        <taxon>Archosauria</taxon>
        <taxon>Dinosauria</taxon>
        <taxon>Saurischia</taxon>
        <taxon>Theropoda</taxon>
        <taxon>Coelurosauria</taxon>
        <taxon>Aves</taxon>
        <taxon>Neognathae</taxon>
        <taxon>Galloanserae</taxon>
        <taxon>Galliformes</taxon>
        <taxon>Phasianidae</taxon>
        <taxon>Perdicinae</taxon>
        <taxon>Coturnix</taxon>
    </lineage>
</organism>
<accession>P19631</accession>
<protein>
    <recommendedName>
        <fullName>Alcohol dehydrogenase 1</fullName>
        <ecNumber>1.1.1.1</ecNumber>
    </recommendedName>
    <alternativeName>
        <fullName>ADH3</fullName>
    </alternativeName>
    <alternativeName>
        <fullName>Alcohol dehydrogenase subunit alpha</fullName>
    </alternativeName>
</protein>